<keyword id="KW-1039">Host endosome</keyword>
<keyword id="KW-1040">Host Golgi apparatus</keyword>
<keyword id="KW-1043">Host membrane</keyword>
<keyword id="KW-0945">Host-virus interaction</keyword>
<keyword id="KW-1080">Inhibition of host adaptive immune response by virus</keyword>
<keyword id="KW-1115">Inhibition of host MHC class I molecule presentation by virus</keyword>
<keyword id="KW-0472">Membrane</keyword>
<keyword id="KW-0479">Metal-binding</keyword>
<keyword id="KW-1128">Modulation of host ubiquitin pathway by viral E3 ligase</keyword>
<keyword id="KW-1130">Modulation of host ubiquitin pathway by virus</keyword>
<keyword id="KW-0808">Transferase</keyword>
<keyword id="KW-0812">Transmembrane</keyword>
<keyword id="KW-1133">Transmembrane helix</keyword>
<keyword id="KW-0833">Ubl conjugation pathway</keyword>
<keyword id="KW-0899">Viral immunoevasion</keyword>
<keyword id="KW-0862">Zinc</keyword>
<keyword id="KW-0863">Zinc-finger</keyword>
<sequence length="155" mass="18461">MDPVCWICKDDYSIEKNYCNCKNEYKVVHDECMKKWIQYSRERSCKLCNKEYNIISVRKPFSQWVFSIKDCKKSAILYATLFLCTFIISLVLTRINITKIIDTSKNDVSFKLVTMIFYLLPFVITCISFITLIVYLYKYCKISAKNNTYDTIYEL</sequence>
<organism>
    <name type="scientific">Swinepox virus (strain Kasza)</name>
    <name type="common">SWPV</name>
    <dbReference type="NCBI Taxonomy" id="10277"/>
    <lineage>
        <taxon>Viruses</taxon>
        <taxon>Varidnaviria</taxon>
        <taxon>Bamfordvirae</taxon>
        <taxon>Nucleocytoviricota</taxon>
        <taxon>Pokkesviricetes</taxon>
        <taxon>Chitovirales</taxon>
        <taxon>Poxviridae</taxon>
        <taxon>Chordopoxvirinae</taxon>
        <taxon>Suipoxvirus</taxon>
        <taxon>Swinepox virus</taxon>
    </lineage>
</organism>
<proteinExistence type="inferred from homology"/>
<evidence type="ECO:0000250" key="1"/>
<evidence type="ECO:0000255" key="2"/>
<evidence type="ECO:0000255" key="3">
    <source>
        <dbReference type="PROSITE-ProRule" id="PRU00623"/>
    </source>
</evidence>
<evidence type="ECO:0000305" key="4"/>
<comment type="function">
    <text evidence="1">E3 ubiquitin-protein ligase which promotes ubiquitination and subsequent degradation of host MHC-I and CD4 molecules, presumably to prevent lysis of infected cells by cytotoxic T-lymphocytes and NK cell. Binds target molecules through transmembrane interaction. The result of this ubiquitination is the enhancement of the endocytosis of the target chain and the delivery to the lysosome, where it is proteolytically destroyed.</text>
</comment>
<comment type="catalytic activity">
    <reaction>
        <text>S-ubiquitinyl-[E2 ubiquitin-conjugating enzyme]-L-cysteine + [acceptor protein]-L-lysine = [E2 ubiquitin-conjugating enzyme]-L-cysteine + N(6)-ubiquitinyl-[acceptor protein]-L-lysine.</text>
        <dbReference type="EC" id="2.3.2.27"/>
    </reaction>
</comment>
<comment type="subcellular location">
    <subcellularLocation>
        <location evidence="4">Host membrane</location>
        <topology evidence="4">Multi-pass membrane protein</topology>
    </subcellularLocation>
    <subcellularLocation>
        <location>Host Golgi apparatus</location>
        <location>Host trans-Golgi network membrane</location>
    </subcellularLocation>
    <subcellularLocation>
        <location evidence="1">Host early endosome membrane</location>
    </subcellularLocation>
</comment>
<comment type="domain">
    <text evidence="3">The RING-CH-type zinc finger domain is required for E3 ligase activity.</text>
</comment>
<comment type="similarity">
    <text evidence="4">Belongs to the poxviridae LAP protein family.</text>
</comment>
<name>LAP_SWPVK</name>
<reference key="1">
    <citation type="journal article" date="1993" name="Virology">
        <title>DNA sequence analysis of conserved and unique regions of swinepox virus: identification of genetic elements supporting phenotypic observations including a novel G protein-coupled receptor homologue.</title>
        <authorList>
            <person name="Massung R.F."/>
            <person name="Jayarama V."/>
            <person name="Moyer R.W."/>
        </authorList>
    </citation>
    <scope>NUCLEOTIDE SEQUENCE [GENOMIC DNA]</scope>
</reference>
<dbReference type="EC" id="2.3.2.27"/>
<dbReference type="EMBL" id="L22013">
    <property type="protein sequence ID" value="AAC37864.1"/>
    <property type="molecule type" value="Unassigned_RNA"/>
</dbReference>
<dbReference type="SMR" id="P32225"/>
<dbReference type="GO" id="GO:0044174">
    <property type="term" value="C:host cell endosome"/>
    <property type="evidence" value="ECO:0007669"/>
    <property type="project" value="UniProtKB-KW"/>
</dbReference>
<dbReference type="GO" id="GO:0044177">
    <property type="term" value="C:host cell Golgi apparatus"/>
    <property type="evidence" value="ECO:0007669"/>
    <property type="project" value="UniProtKB-SubCell"/>
</dbReference>
<dbReference type="GO" id="GO:0033644">
    <property type="term" value="C:host cell membrane"/>
    <property type="evidence" value="ECO:0007669"/>
    <property type="project" value="UniProtKB-SubCell"/>
</dbReference>
<dbReference type="GO" id="GO:0016020">
    <property type="term" value="C:membrane"/>
    <property type="evidence" value="ECO:0007669"/>
    <property type="project" value="UniProtKB-KW"/>
</dbReference>
<dbReference type="GO" id="GO:0016740">
    <property type="term" value="F:transferase activity"/>
    <property type="evidence" value="ECO:0007669"/>
    <property type="project" value="UniProtKB-KW"/>
</dbReference>
<dbReference type="GO" id="GO:0008270">
    <property type="term" value="F:zinc ion binding"/>
    <property type="evidence" value="ECO:0007669"/>
    <property type="project" value="UniProtKB-KW"/>
</dbReference>
<dbReference type="GO" id="GO:0039648">
    <property type="term" value="P:symbiont-mediated perturbation of host ubiquitin-like protein modification"/>
    <property type="evidence" value="ECO:0007669"/>
    <property type="project" value="UniProtKB-KW"/>
</dbReference>
<dbReference type="GO" id="GO:0046776">
    <property type="term" value="P:symbiont-mediated suppression of host antigen processing and presentation of peptide antigen via MHC class I"/>
    <property type="evidence" value="ECO:0007669"/>
    <property type="project" value="UniProtKB-KW"/>
</dbReference>
<dbReference type="Gene3D" id="3.30.40.10">
    <property type="entry name" value="Zinc/RING finger domain, C3HC4 (zinc finger)"/>
    <property type="match status" value="1"/>
</dbReference>
<dbReference type="InterPro" id="IPR011016">
    <property type="entry name" value="Znf_RING-CH"/>
</dbReference>
<dbReference type="InterPro" id="IPR013083">
    <property type="entry name" value="Znf_RING/FYVE/PHD"/>
</dbReference>
<dbReference type="PANTHER" id="PTHR46065">
    <property type="entry name" value="E3 UBIQUITIN-PROTEIN LIGASE MARCH 2/3 FAMILY MEMBER"/>
    <property type="match status" value="1"/>
</dbReference>
<dbReference type="PANTHER" id="PTHR46065:SF3">
    <property type="entry name" value="FI20425P1"/>
    <property type="match status" value="1"/>
</dbReference>
<dbReference type="Pfam" id="PF12906">
    <property type="entry name" value="RINGv"/>
    <property type="match status" value="1"/>
</dbReference>
<dbReference type="SMART" id="SM00744">
    <property type="entry name" value="RINGv"/>
    <property type="match status" value="1"/>
</dbReference>
<dbReference type="SUPFAM" id="SSF57850">
    <property type="entry name" value="RING/U-box"/>
    <property type="match status" value="1"/>
</dbReference>
<dbReference type="PROSITE" id="PS51292">
    <property type="entry name" value="ZF_RING_CH"/>
    <property type="match status" value="1"/>
</dbReference>
<feature type="chain" id="PRO_0000099751" description="E3 ubiquitin-protein ligase LAP">
    <location>
        <begin position="1"/>
        <end position="155"/>
    </location>
</feature>
<feature type="topological domain" description="Cytoplasmic" evidence="2">
    <location>
        <begin position="1"/>
        <end position="74"/>
    </location>
</feature>
<feature type="transmembrane region" description="Helical" evidence="2">
    <location>
        <begin position="75"/>
        <end position="95"/>
    </location>
</feature>
<feature type="topological domain" description="Lumenal" evidence="2">
    <location>
        <begin position="96"/>
        <end position="115"/>
    </location>
</feature>
<feature type="transmembrane region" description="Helical" evidence="2">
    <location>
        <begin position="116"/>
        <end position="136"/>
    </location>
</feature>
<feature type="topological domain" description="Cytoplasmic" evidence="2">
    <location>
        <begin position="137"/>
        <end position="155"/>
    </location>
</feature>
<feature type="zinc finger region" description="RING-CH-type" evidence="3">
    <location>
        <begin position="1"/>
        <end position="55"/>
    </location>
</feature>
<feature type="binding site" evidence="3">
    <location>
        <position position="5"/>
    </location>
    <ligand>
        <name>Zn(2+)</name>
        <dbReference type="ChEBI" id="CHEBI:29105"/>
        <label>1</label>
    </ligand>
</feature>
<feature type="binding site" evidence="3">
    <location>
        <position position="8"/>
    </location>
    <ligand>
        <name>Zn(2+)</name>
        <dbReference type="ChEBI" id="CHEBI:29105"/>
        <label>1</label>
    </ligand>
</feature>
<feature type="binding site" evidence="3">
    <location>
        <position position="19"/>
    </location>
    <ligand>
        <name>Zn(2+)</name>
        <dbReference type="ChEBI" id="CHEBI:29105"/>
        <label>2</label>
    </ligand>
</feature>
<feature type="binding site" evidence="3">
    <location>
        <position position="21"/>
    </location>
    <ligand>
        <name>Zn(2+)</name>
        <dbReference type="ChEBI" id="CHEBI:29105"/>
        <label>2</label>
    </ligand>
</feature>
<feature type="binding site" evidence="3">
    <location>
        <position position="29"/>
    </location>
    <ligand>
        <name>Zn(2+)</name>
        <dbReference type="ChEBI" id="CHEBI:29105"/>
        <label>1</label>
    </ligand>
</feature>
<feature type="binding site" evidence="3">
    <location>
        <position position="32"/>
    </location>
    <ligand>
        <name>Zn(2+)</name>
        <dbReference type="ChEBI" id="CHEBI:29105"/>
        <label>1</label>
    </ligand>
</feature>
<feature type="binding site" evidence="3">
    <location>
        <position position="45"/>
    </location>
    <ligand>
        <name>Zn(2+)</name>
        <dbReference type="ChEBI" id="CHEBI:29105"/>
        <label>2</label>
    </ligand>
</feature>
<feature type="binding site" evidence="3">
    <location>
        <position position="48"/>
    </location>
    <ligand>
        <name>Zn(2+)</name>
        <dbReference type="ChEBI" id="CHEBI:29105"/>
        <label>2</label>
    </ligand>
</feature>
<organismHost>
    <name type="scientific">Sus scrofa</name>
    <name type="common">Pig</name>
    <dbReference type="NCBI Taxonomy" id="9823"/>
</organismHost>
<gene>
    <name type="primary">LAP</name>
    <name type="ORF">C7L</name>
</gene>
<accession>P32225</accession>
<protein>
    <recommendedName>
        <fullName>E3 ubiquitin-protein ligase LAP</fullName>
        <ecNumber>2.3.2.27</ecNumber>
    </recommendedName>
    <alternativeName>
        <fullName>Leukemia associated protein</fullName>
        <shortName>LAP</shortName>
    </alternativeName>
    <alternativeName>
        <fullName evidence="4">RING-type E3 ubiquitin transferase LAP</fullName>
    </alternativeName>
</protein>